<organism>
    <name type="scientific">Bordetella parapertussis (strain 12822 / ATCC BAA-587 / NCTC 13253)</name>
    <dbReference type="NCBI Taxonomy" id="257311"/>
    <lineage>
        <taxon>Bacteria</taxon>
        <taxon>Pseudomonadati</taxon>
        <taxon>Pseudomonadota</taxon>
        <taxon>Betaproteobacteria</taxon>
        <taxon>Burkholderiales</taxon>
        <taxon>Alcaligenaceae</taxon>
        <taxon>Bordetella</taxon>
    </lineage>
</organism>
<sequence>MTSPVLNPALPATAAAPVAATPSAVGSAGIVAPVFLRFDEPLPLASGQTLNGYELAIETYGTLNAQRTNAVLVCHALNASHHVAGVSADNPKDVGWWDNMVGPGKPVDTNRYFVIGVNNLGSCFGSTGPASINPATGRPWGAAFPVLTVEDWVRAQARVADHFGIERFAAVMGGSLGGMQALSWAITCPQRVANCVVVASTPRLSAQNIGFNEVARRAIITDPDFHGGDYYAHGTVPGRGLSVARMIGHITYLSDDDMAEKFGRTRREPAADGAYRYGYDVEFEVESYLRYQGEKFSRYFDANTYLLITRALDYFDPARATGGDLARALAPATADFLLVSFSTDWRFPPERSREMVRALLKNGSPVTYAEIDAPHGHDAFLLDDARYHAVVRGYYERIARELGLNGAVAPEGNPA</sequence>
<name>METXS_BORPA</name>
<gene>
    <name evidence="1" type="primary">metXS</name>
    <name type="ordered locus">BPP4083</name>
</gene>
<protein>
    <recommendedName>
        <fullName evidence="1">Homoserine O-succinyltransferase</fullName>
        <shortName evidence="1">HST</shortName>
        <ecNumber evidence="1">2.3.1.46</ecNumber>
    </recommendedName>
    <alternativeName>
        <fullName evidence="1">Homoserine transsuccinylase</fullName>
        <shortName evidence="1">HTS</shortName>
    </alternativeName>
</protein>
<dbReference type="EC" id="2.3.1.46" evidence="1"/>
<dbReference type="EMBL" id="BX640435">
    <property type="protein sequence ID" value="CAE39364.1"/>
    <property type="molecule type" value="Genomic_DNA"/>
</dbReference>
<dbReference type="RefSeq" id="WP_010929380.1">
    <property type="nucleotide sequence ID" value="NC_002928.3"/>
</dbReference>
<dbReference type="SMR" id="Q7W3F8"/>
<dbReference type="ESTHER" id="borpe-METX">
    <property type="family name" value="Homoserine_transacetylase"/>
</dbReference>
<dbReference type="GeneID" id="93205880"/>
<dbReference type="KEGG" id="bpa:BPP4083"/>
<dbReference type="HOGENOM" id="CLU_028760_1_2_4"/>
<dbReference type="UniPathway" id="UPA00051">
    <property type="reaction ID" value="UER00075"/>
</dbReference>
<dbReference type="Proteomes" id="UP000001421">
    <property type="component" value="Chromosome"/>
</dbReference>
<dbReference type="GO" id="GO:0005737">
    <property type="term" value="C:cytoplasm"/>
    <property type="evidence" value="ECO:0007669"/>
    <property type="project" value="UniProtKB-SubCell"/>
</dbReference>
<dbReference type="GO" id="GO:0004414">
    <property type="term" value="F:homoserine O-acetyltransferase activity"/>
    <property type="evidence" value="ECO:0007669"/>
    <property type="project" value="TreeGrafter"/>
</dbReference>
<dbReference type="GO" id="GO:0008899">
    <property type="term" value="F:homoserine O-succinyltransferase activity"/>
    <property type="evidence" value="ECO:0007669"/>
    <property type="project" value="UniProtKB-UniRule"/>
</dbReference>
<dbReference type="GO" id="GO:0009092">
    <property type="term" value="P:homoserine metabolic process"/>
    <property type="evidence" value="ECO:0007669"/>
    <property type="project" value="TreeGrafter"/>
</dbReference>
<dbReference type="GO" id="GO:0009086">
    <property type="term" value="P:methionine biosynthetic process"/>
    <property type="evidence" value="ECO:0007669"/>
    <property type="project" value="UniProtKB-UniRule"/>
</dbReference>
<dbReference type="FunFam" id="1.10.1740.110:FF:000001">
    <property type="entry name" value="Homoserine O-acetyltransferase"/>
    <property type="match status" value="1"/>
</dbReference>
<dbReference type="Gene3D" id="1.10.1740.110">
    <property type="match status" value="1"/>
</dbReference>
<dbReference type="Gene3D" id="3.40.50.1820">
    <property type="entry name" value="alpha/beta hydrolase"/>
    <property type="match status" value="1"/>
</dbReference>
<dbReference type="HAMAP" id="MF_00296">
    <property type="entry name" value="MetX_acyltransf"/>
    <property type="match status" value="1"/>
</dbReference>
<dbReference type="InterPro" id="IPR000073">
    <property type="entry name" value="AB_hydrolase_1"/>
</dbReference>
<dbReference type="InterPro" id="IPR029058">
    <property type="entry name" value="AB_hydrolase_fold"/>
</dbReference>
<dbReference type="InterPro" id="IPR008220">
    <property type="entry name" value="HAT_MetX-like"/>
</dbReference>
<dbReference type="NCBIfam" id="TIGR01392">
    <property type="entry name" value="homoserO_Ac_trn"/>
    <property type="match status" value="1"/>
</dbReference>
<dbReference type="NCBIfam" id="NF001209">
    <property type="entry name" value="PRK00175.1"/>
    <property type="match status" value="1"/>
</dbReference>
<dbReference type="PANTHER" id="PTHR32268">
    <property type="entry name" value="HOMOSERINE O-ACETYLTRANSFERASE"/>
    <property type="match status" value="1"/>
</dbReference>
<dbReference type="PANTHER" id="PTHR32268:SF11">
    <property type="entry name" value="HOMOSERINE O-ACETYLTRANSFERASE"/>
    <property type="match status" value="1"/>
</dbReference>
<dbReference type="Pfam" id="PF00561">
    <property type="entry name" value="Abhydrolase_1"/>
    <property type="match status" value="1"/>
</dbReference>
<dbReference type="PIRSF" id="PIRSF000443">
    <property type="entry name" value="Homoser_Ac_trans"/>
    <property type="match status" value="1"/>
</dbReference>
<dbReference type="SUPFAM" id="SSF53474">
    <property type="entry name" value="alpha/beta-Hydrolases"/>
    <property type="match status" value="1"/>
</dbReference>
<keyword id="KW-0012">Acyltransferase</keyword>
<keyword id="KW-0028">Amino-acid biosynthesis</keyword>
<keyword id="KW-0963">Cytoplasm</keyword>
<keyword id="KW-0486">Methionine biosynthesis</keyword>
<keyword id="KW-0808">Transferase</keyword>
<evidence type="ECO:0000255" key="1">
    <source>
        <dbReference type="HAMAP-Rule" id="MF_00296"/>
    </source>
</evidence>
<reference key="1">
    <citation type="journal article" date="2003" name="Nat. Genet.">
        <title>Comparative analysis of the genome sequences of Bordetella pertussis, Bordetella parapertussis and Bordetella bronchiseptica.</title>
        <authorList>
            <person name="Parkhill J."/>
            <person name="Sebaihia M."/>
            <person name="Preston A."/>
            <person name="Murphy L.D."/>
            <person name="Thomson N.R."/>
            <person name="Harris D.E."/>
            <person name="Holden M.T.G."/>
            <person name="Churcher C.M."/>
            <person name="Bentley S.D."/>
            <person name="Mungall K.L."/>
            <person name="Cerdeno-Tarraga A.-M."/>
            <person name="Temple L."/>
            <person name="James K.D."/>
            <person name="Harris B."/>
            <person name="Quail M.A."/>
            <person name="Achtman M."/>
            <person name="Atkin R."/>
            <person name="Baker S."/>
            <person name="Basham D."/>
            <person name="Bason N."/>
            <person name="Cherevach I."/>
            <person name="Chillingworth T."/>
            <person name="Collins M."/>
            <person name="Cronin A."/>
            <person name="Davis P."/>
            <person name="Doggett J."/>
            <person name="Feltwell T."/>
            <person name="Goble A."/>
            <person name="Hamlin N."/>
            <person name="Hauser H."/>
            <person name="Holroyd S."/>
            <person name="Jagels K."/>
            <person name="Leather S."/>
            <person name="Moule S."/>
            <person name="Norberczak H."/>
            <person name="O'Neil S."/>
            <person name="Ormond D."/>
            <person name="Price C."/>
            <person name="Rabbinowitsch E."/>
            <person name="Rutter S."/>
            <person name="Sanders M."/>
            <person name="Saunders D."/>
            <person name="Seeger K."/>
            <person name="Sharp S."/>
            <person name="Simmonds M."/>
            <person name="Skelton J."/>
            <person name="Squares R."/>
            <person name="Squares S."/>
            <person name="Stevens K."/>
            <person name="Unwin L."/>
            <person name="Whitehead S."/>
            <person name="Barrell B.G."/>
            <person name="Maskell D.J."/>
        </authorList>
    </citation>
    <scope>NUCLEOTIDE SEQUENCE [LARGE SCALE GENOMIC DNA]</scope>
    <source>
        <strain>12822 / ATCC BAA-587 / NCTC 13253</strain>
    </source>
</reference>
<proteinExistence type="inferred from homology"/>
<comment type="function">
    <text evidence="1">Transfers a succinyl group from succinyl-CoA to L-homoserine, forming succinyl-L-homoserine.</text>
</comment>
<comment type="catalytic activity">
    <reaction evidence="1">
        <text>L-homoserine + succinyl-CoA = O-succinyl-L-homoserine + CoA</text>
        <dbReference type="Rhea" id="RHEA:22008"/>
        <dbReference type="ChEBI" id="CHEBI:57287"/>
        <dbReference type="ChEBI" id="CHEBI:57292"/>
        <dbReference type="ChEBI" id="CHEBI:57476"/>
        <dbReference type="ChEBI" id="CHEBI:57661"/>
        <dbReference type="EC" id="2.3.1.46"/>
    </reaction>
</comment>
<comment type="pathway">
    <text evidence="1">Amino-acid biosynthesis; L-methionine biosynthesis via de novo pathway; O-succinyl-L-homoserine from L-homoserine: step 1/1.</text>
</comment>
<comment type="subunit">
    <text evidence="1">Homodimer.</text>
</comment>
<comment type="subcellular location">
    <subcellularLocation>
        <location evidence="1">Cytoplasm</location>
    </subcellularLocation>
</comment>
<comment type="similarity">
    <text evidence="1">Belongs to the AB hydrolase superfamily. MetX family.</text>
</comment>
<feature type="chain" id="PRO_0000155705" description="Homoserine O-succinyltransferase">
    <location>
        <begin position="1"/>
        <end position="415"/>
    </location>
</feature>
<feature type="domain" description="AB hydrolase-1" evidence="1">
    <location>
        <begin position="69"/>
        <end position="383"/>
    </location>
</feature>
<feature type="active site" description="Nucleophile" evidence="1">
    <location>
        <position position="175"/>
    </location>
</feature>
<feature type="active site" evidence="1">
    <location>
        <position position="344"/>
    </location>
</feature>
<feature type="active site" evidence="1">
    <location>
        <position position="377"/>
    </location>
</feature>
<feature type="binding site" evidence="1">
    <location>
        <position position="245"/>
    </location>
    <ligand>
        <name>substrate</name>
    </ligand>
</feature>
<feature type="binding site" evidence="1">
    <location>
        <position position="378"/>
    </location>
    <ligand>
        <name>substrate</name>
    </ligand>
</feature>
<feature type="site" description="Important for acyl-CoA specificity" evidence="1">
    <location>
        <position position="346"/>
    </location>
</feature>
<accession>Q7W3F8</accession>